<keyword id="KW-0030">Aminoacyl-tRNA synthetase</keyword>
<keyword id="KW-0067">ATP-binding</keyword>
<keyword id="KW-0963">Cytoplasm</keyword>
<keyword id="KW-0436">Ligase</keyword>
<keyword id="KW-0547">Nucleotide-binding</keyword>
<keyword id="KW-0648">Protein biosynthesis</keyword>
<sequence length="556" mass="62636">MNIVEQMKQKLKEEIKEAVIRSGVATEADVPSVILETPKDKAHGDYSTNVAMQLARVAKKAPRMIAEDIVRHFNGEAVFVKKVDIAGPGFINFYMDNRYLTELVPAILQAGDAYGETNVGQGQKVQVEFVSANPTGSLHLGHARGAAVGDSLCNILKKAGFDVTREYYINDAGNQIANLAKSVEARYFQALGIKKDMPEDGYFGEDIIELGKKLAEEHGDKFVALDEQERLQLFREYGLAFEMDKIKKDLADFRVTFDVWYSETSLYHNGKIDKALETLREKGHIYEQDGATWFRSTTFGDDKDRVLIKQDGTYTYLLPDIAYHQDKLERGFEKIINIWGADHHGYIPRMKAAIAALGYDPDVLEVEIIQLVSLYQNGEKVRMSKRTGKAVTLRDLMEEVGLDATRYFFAMRSSDTHLDFDMDLAVSQSNENPVYYAQYAHARVCSMLRQGEEQGWRYDGDLSFTYELAEKEIDLLKKLGEFPSAVAEAAVKRSPHRMTNYIFDLASALHSFYNAEKVLDAANVEKSRARLALMKAVQITLKNALALVGVHAPEKM</sequence>
<feature type="chain" id="PRO_1000198871" description="Arginine--tRNA ligase">
    <location>
        <begin position="1"/>
        <end position="556"/>
    </location>
</feature>
<feature type="short sequence motif" description="'HIGH' region">
    <location>
        <begin position="132"/>
        <end position="142"/>
    </location>
</feature>
<accession>B7GMJ3</accession>
<comment type="catalytic activity">
    <reaction evidence="1">
        <text>tRNA(Arg) + L-arginine + ATP = L-arginyl-tRNA(Arg) + AMP + diphosphate</text>
        <dbReference type="Rhea" id="RHEA:20301"/>
        <dbReference type="Rhea" id="RHEA-COMP:9658"/>
        <dbReference type="Rhea" id="RHEA-COMP:9673"/>
        <dbReference type="ChEBI" id="CHEBI:30616"/>
        <dbReference type="ChEBI" id="CHEBI:32682"/>
        <dbReference type="ChEBI" id="CHEBI:33019"/>
        <dbReference type="ChEBI" id="CHEBI:78442"/>
        <dbReference type="ChEBI" id="CHEBI:78513"/>
        <dbReference type="ChEBI" id="CHEBI:456215"/>
        <dbReference type="EC" id="6.1.1.19"/>
    </reaction>
</comment>
<comment type="subunit">
    <text evidence="1">Monomer.</text>
</comment>
<comment type="subcellular location">
    <subcellularLocation>
        <location evidence="1">Cytoplasm</location>
    </subcellularLocation>
</comment>
<comment type="similarity">
    <text evidence="1">Belongs to the class-I aminoacyl-tRNA synthetase family.</text>
</comment>
<reference key="1">
    <citation type="journal article" date="2008" name="Genome Biol.">
        <title>Encapsulated in silica: genome, proteome and physiology of the thermophilic bacterium Anoxybacillus flavithermus WK1.</title>
        <authorList>
            <person name="Saw J.H."/>
            <person name="Mountain B.W."/>
            <person name="Feng L."/>
            <person name="Omelchenko M.V."/>
            <person name="Hou S."/>
            <person name="Saito J.A."/>
            <person name="Stott M.B."/>
            <person name="Li D."/>
            <person name="Zhao G."/>
            <person name="Wu J."/>
            <person name="Galperin M.Y."/>
            <person name="Koonin E.V."/>
            <person name="Makarova K.S."/>
            <person name="Wolf Y.I."/>
            <person name="Rigden D.J."/>
            <person name="Dunfield P.F."/>
            <person name="Wang L."/>
            <person name="Alam M."/>
        </authorList>
    </citation>
    <scope>NUCLEOTIDE SEQUENCE [LARGE SCALE GENOMIC DNA]</scope>
    <source>
        <strain>DSM 21510 / WK1</strain>
    </source>
</reference>
<protein>
    <recommendedName>
        <fullName evidence="1">Arginine--tRNA ligase</fullName>
        <ecNumber evidence="1">6.1.1.19</ecNumber>
    </recommendedName>
    <alternativeName>
        <fullName evidence="1">Arginyl-tRNA synthetase</fullName>
        <shortName evidence="1">ArgRS</shortName>
    </alternativeName>
</protein>
<proteinExistence type="inferred from homology"/>
<gene>
    <name evidence="1" type="primary">argS</name>
    <name type="ordered locus">Aflv_2742</name>
</gene>
<organism>
    <name type="scientific">Anoxybacillus flavithermus (strain DSM 21510 / WK1)</name>
    <dbReference type="NCBI Taxonomy" id="491915"/>
    <lineage>
        <taxon>Bacteria</taxon>
        <taxon>Bacillati</taxon>
        <taxon>Bacillota</taxon>
        <taxon>Bacilli</taxon>
        <taxon>Bacillales</taxon>
        <taxon>Anoxybacillaceae</taxon>
        <taxon>Anoxybacillus</taxon>
    </lineage>
</organism>
<evidence type="ECO:0000255" key="1">
    <source>
        <dbReference type="HAMAP-Rule" id="MF_00123"/>
    </source>
</evidence>
<name>SYR_ANOFW</name>
<dbReference type="EC" id="6.1.1.19" evidence="1"/>
<dbReference type="EMBL" id="CP000922">
    <property type="protein sequence ID" value="ACJ35095.1"/>
    <property type="molecule type" value="Genomic_DNA"/>
</dbReference>
<dbReference type="RefSeq" id="WP_012576219.1">
    <property type="nucleotide sequence ID" value="NC_011567.1"/>
</dbReference>
<dbReference type="SMR" id="B7GMJ3"/>
<dbReference type="STRING" id="491915.Aflv_2742"/>
<dbReference type="GeneID" id="7039015"/>
<dbReference type="KEGG" id="afl:Aflv_2742"/>
<dbReference type="PATRIC" id="fig|491915.6.peg.2826"/>
<dbReference type="eggNOG" id="COG0018">
    <property type="taxonomic scope" value="Bacteria"/>
</dbReference>
<dbReference type="HOGENOM" id="CLU_006406_0_1_9"/>
<dbReference type="Proteomes" id="UP000000742">
    <property type="component" value="Chromosome"/>
</dbReference>
<dbReference type="GO" id="GO:0005737">
    <property type="term" value="C:cytoplasm"/>
    <property type="evidence" value="ECO:0007669"/>
    <property type="project" value="UniProtKB-SubCell"/>
</dbReference>
<dbReference type="GO" id="GO:0004814">
    <property type="term" value="F:arginine-tRNA ligase activity"/>
    <property type="evidence" value="ECO:0007669"/>
    <property type="project" value="UniProtKB-UniRule"/>
</dbReference>
<dbReference type="GO" id="GO:0005524">
    <property type="term" value="F:ATP binding"/>
    <property type="evidence" value="ECO:0007669"/>
    <property type="project" value="UniProtKB-UniRule"/>
</dbReference>
<dbReference type="GO" id="GO:0006420">
    <property type="term" value="P:arginyl-tRNA aminoacylation"/>
    <property type="evidence" value="ECO:0007669"/>
    <property type="project" value="UniProtKB-UniRule"/>
</dbReference>
<dbReference type="CDD" id="cd00671">
    <property type="entry name" value="ArgRS_core"/>
    <property type="match status" value="1"/>
</dbReference>
<dbReference type="FunFam" id="1.10.730.10:FF:000008">
    <property type="entry name" value="Arginine--tRNA ligase"/>
    <property type="match status" value="1"/>
</dbReference>
<dbReference type="FunFam" id="3.30.1360.70:FF:000003">
    <property type="entry name" value="Arginine--tRNA ligase"/>
    <property type="match status" value="1"/>
</dbReference>
<dbReference type="FunFam" id="3.40.50.620:FF:000062">
    <property type="entry name" value="Arginine--tRNA ligase"/>
    <property type="match status" value="1"/>
</dbReference>
<dbReference type="Gene3D" id="3.30.1360.70">
    <property type="entry name" value="Arginyl tRNA synthetase N-terminal domain"/>
    <property type="match status" value="1"/>
</dbReference>
<dbReference type="Gene3D" id="3.40.50.620">
    <property type="entry name" value="HUPs"/>
    <property type="match status" value="1"/>
</dbReference>
<dbReference type="Gene3D" id="1.10.730.10">
    <property type="entry name" value="Isoleucyl-tRNA Synthetase, Domain 1"/>
    <property type="match status" value="1"/>
</dbReference>
<dbReference type="HAMAP" id="MF_00123">
    <property type="entry name" value="Arg_tRNA_synth"/>
    <property type="match status" value="1"/>
</dbReference>
<dbReference type="InterPro" id="IPR001412">
    <property type="entry name" value="aa-tRNA-synth_I_CS"/>
</dbReference>
<dbReference type="InterPro" id="IPR001278">
    <property type="entry name" value="Arg-tRNA-ligase"/>
</dbReference>
<dbReference type="InterPro" id="IPR005148">
    <property type="entry name" value="Arg-tRNA-synth_N"/>
</dbReference>
<dbReference type="InterPro" id="IPR036695">
    <property type="entry name" value="Arg-tRNA-synth_N_sf"/>
</dbReference>
<dbReference type="InterPro" id="IPR035684">
    <property type="entry name" value="ArgRS_core"/>
</dbReference>
<dbReference type="InterPro" id="IPR008909">
    <property type="entry name" value="DALR_anticod-bd"/>
</dbReference>
<dbReference type="InterPro" id="IPR014729">
    <property type="entry name" value="Rossmann-like_a/b/a_fold"/>
</dbReference>
<dbReference type="InterPro" id="IPR009080">
    <property type="entry name" value="tRNAsynth_Ia_anticodon-bd"/>
</dbReference>
<dbReference type="NCBIfam" id="TIGR00456">
    <property type="entry name" value="argS"/>
    <property type="match status" value="1"/>
</dbReference>
<dbReference type="PANTHER" id="PTHR11956:SF5">
    <property type="entry name" value="ARGININE--TRNA LIGASE, CYTOPLASMIC"/>
    <property type="match status" value="1"/>
</dbReference>
<dbReference type="PANTHER" id="PTHR11956">
    <property type="entry name" value="ARGINYL-TRNA SYNTHETASE"/>
    <property type="match status" value="1"/>
</dbReference>
<dbReference type="Pfam" id="PF03485">
    <property type="entry name" value="Arg_tRNA_synt_N"/>
    <property type="match status" value="1"/>
</dbReference>
<dbReference type="Pfam" id="PF05746">
    <property type="entry name" value="DALR_1"/>
    <property type="match status" value="1"/>
</dbReference>
<dbReference type="Pfam" id="PF00750">
    <property type="entry name" value="tRNA-synt_1d"/>
    <property type="match status" value="1"/>
</dbReference>
<dbReference type="PRINTS" id="PR01038">
    <property type="entry name" value="TRNASYNTHARG"/>
</dbReference>
<dbReference type="SMART" id="SM01016">
    <property type="entry name" value="Arg_tRNA_synt_N"/>
    <property type="match status" value="1"/>
</dbReference>
<dbReference type="SMART" id="SM00836">
    <property type="entry name" value="DALR_1"/>
    <property type="match status" value="1"/>
</dbReference>
<dbReference type="SUPFAM" id="SSF47323">
    <property type="entry name" value="Anticodon-binding domain of a subclass of class I aminoacyl-tRNA synthetases"/>
    <property type="match status" value="1"/>
</dbReference>
<dbReference type="SUPFAM" id="SSF55190">
    <property type="entry name" value="Arginyl-tRNA synthetase (ArgRS), N-terminal 'additional' domain"/>
    <property type="match status" value="1"/>
</dbReference>
<dbReference type="SUPFAM" id="SSF52374">
    <property type="entry name" value="Nucleotidylyl transferase"/>
    <property type="match status" value="1"/>
</dbReference>
<dbReference type="PROSITE" id="PS00178">
    <property type="entry name" value="AA_TRNA_LIGASE_I"/>
    <property type="match status" value="1"/>
</dbReference>